<reference key="1">
    <citation type="journal article" date="2004" name="Genome Res.">
        <title>The status, quality, and expansion of the NIH full-length cDNA project: the Mammalian Gene Collection (MGC).</title>
        <authorList>
            <consortium name="The MGC Project Team"/>
        </authorList>
    </citation>
    <scope>NUCLEOTIDE SEQUENCE [LARGE SCALE MRNA]</scope>
    <source>
        <tissue>Testis</tissue>
    </source>
</reference>
<proteinExistence type="evidence at transcript level"/>
<keyword id="KW-0007">Acetylation</keyword>
<keyword id="KW-0131">Cell cycle</keyword>
<keyword id="KW-0132">Cell division</keyword>
<keyword id="KW-0137">Centromere</keyword>
<keyword id="KW-0158">Chromosome</keyword>
<keyword id="KW-0175">Coiled coil</keyword>
<keyword id="KW-0963">Cytoplasm</keyword>
<keyword id="KW-0206">Cytoskeleton</keyword>
<keyword id="KW-0995">Kinetochore</keyword>
<keyword id="KW-0498">Mitosis</keyword>
<keyword id="KW-0539">Nucleus</keyword>
<keyword id="KW-0597">Phosphoprotein</keyword>
<keyword id="KW-1185">Reference proteome</keyword>
<keyword id="KW-0832">Ubl conjugation</keyword>
<feature type="chain" id="PRO_0000274519" description="Protein Spindly">
    <location>
        <begin position="1"/>
        <end position="597"/>
    </location>
</feature>
<feature type="region of interest" description="Disordered" evidence="4">
    <location>
        <begin position="531"/>
        <end position="597"/>
    </location>
</feature>
<feature type="coiled-coil region" evidence="3">
    <location>
        <begin position="1"/>
        <end position="445"/>
    </location>
</feature>
<feature type="compositionally biased region" description="Polar residues" evidence="4">
    <location>
        <begin position="540"/>
        <end position="549"/>
    </location>
</feature>
<feature type="compositionally biased region" description="Basic and acidic residues" evidence="4">
    <location>
        <begin position="550"/>
        <end position="574"/>
    </location>
</feature>
<feature type="compositionally biased region" description="Polar residues" evidence="4">
    <location>
        <begin position="583"/>
        <end position="597"/>
    </location>
</feature>
<feature type="modified residue" description="N-acetylmethionine" evidence="2">
    <location>
        <position position="1"/>
    </location>
</feature>
<feature type="modified residue" description="Phosphoserine" evidence="2">
    <location>
        <position position="508"/>
    </location>
</feature>
<feature type="modified residue" description="Phosphoserine" evidence="1">
    <location>
        <position position="547"/>
    </location>
</feature>
<name>SPDLY_RAT</name>
<organism>
    <name type="scientific">Rattus norvegicus</name>
    <name type="common">Rat</name>
    <dbReference type="NCBI Taxonomy" id="10116"/>
    <lineage>
        <taxon>Eukaryota</taxon>
        <taxon>Metazoa</taxon>
        <taxon>Chordata</taxon>
        <taxon>Craniata</taxon>
        <taxon>Vertebrata</taxon>
        <taxon>Euteleostomi</taxon>
        <taxon>Mammalia</taxon>
        <taxon>Eutheria</taxon>
        <taxon>Euarchontoglires</taxon>
        <taxon>Glires</taxon>
        <taxon>Rodentia</taxon>
        <taxon>Myomorpha</taxon>
        <taxon>Muroidea</taxon>
        <taxon>Muridae</taxon>
        <taxon>Murinae</taxon>
        <taxon>Rattus</taxon>
    </lineage>
</organism>
<evidence type="ECO:0000250" key="1">
    <source>
        <dbReference type="UniProtKB" id="Q923A2"/>
    </source>
</evidence>
<evidence type="ECO:0000250" key="2">
    <source>
        <dbReference type="UniProtKB" id="Q96EA4"/>
    </source>
</evidence>
<evidence type="ECO:0000255" key="3">
    <source>
        <dbReference type="HAMAP-Rule" id="MF_03041"/>
    </source>
</evidence>
<evidence type="ECO:0000256" key="4">
    <source>
        <dbReference type="SAM" id="MobiDB-lite"/>
    </source>
</evidence>
<sequence length="597" mass="69112">MEADITNLRNKLKECEDERLKAAQYGLQLLERQTELQSQLDKCHEEMMTTAENYNQEKYALQREVELKSRMLESLSCECEALRQQQKAQLEQLEMQLHRSHRQEVHGLRNKLENLKVELDEARLSEKQLKQKLDHQGELLSHKSEELRLLSEQRALSSVSSELLSLQTELTEAEGVKNALREEVNELQCKQEQLECLNASLLHQVDRLKEEKEEREKEAVSYYNALEKARVENQDLQVQLGHALQQAADPNSKGNSLFAEVEDRRVAMERRLNLMKDKYQSLKKQNAFTRDQMNKMKLQISTLLRMRGSQTEFEQQERLFAMLEQKNGEIKHLLGEINKLEKFKNLYENMESKSSTSDSACALEDSTYYTDLLQLKLDKLNKENESTKGELSIQRMKALFESQRTLDIERKLFANERHLQLSESENLKLRAKLDELKLKYEPEERIEVPVLKRRREVLPLNINTPEETAAASATGEDVSRLPLERKEESCLDNLKDNTVQWKQPASLSPHKSLPLDTQPKKEKCVTLVASPASTEVLHEQSGNTPSSPRLTEESRLPTKVKERKEATSKLEKGASKKSHTIMYVSSKSTPEMQCPQQ</sequence>
<protein>
    <recommendedName>
        <fullName evidence="3">Protein Spindly</fullName>
    </recommendedName>
    <alternativeName>
        <fullName evidence="3">Coiled-coil domain-containing protein 99</fullName>
    </alternativeName>
    <alternativeName>
        <fullName evidence="3">Spindle apparatus coiled-coil domain-containing protein 1</fullName>
    </alternativeName>
</protein>
<accession>Q3KR99</accession>
<gene>
    <name type="primary">Spdl1</name>
    <name type="synonym">Ccdc99</name>
</gene>
<comment type="function">
    <text evidence="2 3">Required for the localization of dynein and dynactin to the mitotic kintochore. Dynein is believed to control the initial lateral interaction between the kinetochore and spindle microtubules and to facilitate the subsequent formation of end-on kinetochore-microtubule attachments mediated by the NDC80 complex. Also required for correct spindle orientation. Does not appear to be required for the removal of spindle assembly checkpoint (SAC) proteins from the kinetochore upon bipolar spindle attachment. Acts as an adapter protein linking the dynein motor complex to various cargos and converts dynein from a non-processive to a highly processive motor in the presence of dynactin. Facilitates the interaction between dynein and dynactin and activates dynein processivity (the ability to move along a microtubule for a long distance without falling off the track) (By similarity). Plays a role in cell migration (By similarity).</text>
</comment>
<comment type="subunit">
    <text evidence="2 3">Interacts with KNTC1 and ZW10. These interactions appear weak and may be transient or indirect. Interacts with dynein intermediate chain and dynactin (DCTN1) (By similarity). Interacts with the catalytically active form of USP45 (By similarity).</text>
</comment>
<comment type="subcellular location">
    <subcellularLocation>
        <location evidence="3">Cytoplasm</location>
        <location evidence="3">Cytoskeleton</location>
        <location evidence="3">Microtubule organizing center</location>
        <location evidence="3">Centrosome</location>
    </subcellularLocation>
    <subcellularLocation>
        <location evidence="3">Chromosome</location>
        <location evidence="3">Centromere</location>
        <location evidence="3">Kinetochore</location>
    </subcellularLocation>
    <subcellularLocation>
        <location evidence="3">Nucleus</location>
    </subcellularLocation>
    <subcellularLocation>
        <location evidence="3">Cytoplasm</location>
        <location evidence="3">Cytoskeleton</location>
        <location evidence="3">Spindle pole</location>
    </subcellularLocation>
    <text evidence="3">Localizes to the nucleus in interphase and to the kinetochore in early prometaphase. Relocalizes to the mitotic spindle pole before metaphase and is subsequently lost from the spindle poles after chromosome congression is completed. Removal of this protein from the kinetochore requires the dynein/dynactin complex.</text>
</comment>
<comment type="PTM">
    <text evidence="2">Monoubiquitinated with'Lys-48' linkage (By similarity). Deubiquitinated by USP45 (By similarity).</text>
</comment>
<comment type="similarity">
    <text evidence="3">Belongs to the Spindly family.</text>
</comment>
<dbReference type="EMBL" id="BC105812">
    <property type="protein sequence ID" value="AAI05813.1"/>
    <property type="molecule type" value="mRNA"/>
</dbReference>
<dbReference type="RefSeq" id="NP_001029310.1">
    <property type="nucleotide sequence ID" value="NM_001034138.1"/>
</dbReference>
<dbReference type="RefSeq" id="XP_006246166.1">
    <property type="nucleotide sequence ID" value="XM_006246104.3"/>
</dbReference>
<dbReference type="SMR" id="Q3KR99"/>
<dbReference type="FunCoup" id="Q3KR99">
    <property type="interactions" value="1692"/>
</dbReference>
<dbReference type="STRING" id="10116.ENSRNOP00000009648"/>
<dbReference type="iPTMnet" id="Q3KR99"/>
<dbReference type="PhosphoSitePlus" id="Q3KR99"/>
<dbReference type="PaxDb" id="10116-ENSRNOP00000009648"/>
<dbReference type="Ensembl" id="ENSRNOT00000009648.7">
    <property type="protein sequence ID" value="ENSRNOP00000009648.4"/>
    <property type="gene ID" value="ENSRNOG00000007292.7"/>
</dbReference>
<dbReference type="GeneID" id="303037"/>
<dbReference type="KEGG" id="rno:303037"/>
<dbReference type="UCSC" id="RGD:1306908">
    <property type="organism name" value="rat"/>
</dbReference>
<dbReference type="AGR" id="RGD:1306908"/>
<dbReference type="CTD" id="54908"/>
<dbReference type="RGD" id="1306908">
    <property type="gene designation" value="Spdl1"/>
</dbReference>
<dbReference type="eggNOG" id="ENOG502S27G">
    <property type="taxonomic scope" value="Eukaryota"/>
</dbReference>
<dbReference type="GeneTree" id="ENSGT00510000047951"/>
<dbReference type="HOGENOM" id="CLU_031713_0_0_1"/>
<dbReference type="InParanoid" id="Q3KR99"/>
<dbReference type="OMA" id="KQHAFTK"/>
<dbReference type="OrthoDB" id="84227at9989"/>
<dbReference type="PhylomeDB" id="Q3KR99"/>
<dbReference type="TreeFam" id="TF332470"/>
<dbReference type="Reactome" id="R-RNO-141444">
    <property type="pathway name" value="Amplification of signal from unattached kinetochores via a MAD2 inhibitory signal"/>
</dbReference>
<dbReference type="Reactome" id="R-RNO-2467813">
    <property type="pathway name" value="Separation of Sister Chromatids"/>
</dbReference>
<dbReference type="Reactome" id="R-RNO-2500257">
    <property type="pathway name" value="Resolution of Sister Chromatid Cohesion"/>
</dbReference>
<dbReference type="Reactome" id="R-RNO-5663220">
    <property type="pathway name" value="RHO GTPases Activate Formins"/>
</dbReference>
<dbReference type="Reactome" id="R-RNO-68877">
    <property type="pathway name" value="Mitotic Prometaphase"/>
</dbReference>
<dbReference type="Reactome" id="R-RNO-9648025">
    <property type="pathway name" value="EML4 and NUDC in mitotic spindle formation"/>
</dbReference>
<dbReference type="PRO" id="PR:Q3KR99"/>
<dbReference type="Proteomes" id="UP000002494">
    <property type="component" value="Chromosome 10"/>
</dbReference>
<dbReference type="Bgee" id="ENSRNOG00000007292">
    <property type="expression patterns" value="Expressed in thymus and 19 other cell types or tissues"/>
</dbReference>
<dbReference type="GO" id="GO:0005813">
    <property type="term" value="C:centrosome"/>
    <property type="evidence" value="ECO:0007669"/>
    <property type="project" value="UniProtKB-SubCell"/>
</dbReference>
<dbReference type="GO" id="GO:0005737">
    <property type="term" value="C:cytoplasm"/>
    <property type="evidence" value="ECO:0007669"/>
    <property type="project" value="UniProtKB-KW"/>
</dbReference>
<dbReference type="GO" id="GO:0005634">
    <property type="term" value="C:nucleus"/>
    <property type="evidence" value="ECO:0000250"/>
    <property type="project" value="UniProtKB"/>
</dbReference>
<dbReference type="GO" id="GO:0000940">
    <property type="term" value="C:outer kinetochore"/>
    <property type="evidence" value="ECO:0000250"/>
    <property type="project" value="UniProtKB"/>
</dbReference>
<dbReference type="GO" id="GO:0000922">
    <property type="term" value="C:spindle pole"/>
    <property type="evidence" value="ECO:0000250"/>
    <property type="project" value="UniProtKB"/>
</dbReference>
<dbReference type="GO" id="GO:0019899">
    <property type="term" value="F:enzyme binding"/>
    <property type="evidence" value="ECO:0000266"/>
    <property type="project" value="RGD"/>
</dbReference>
<dbReference type="GO" id="GO:0043515">
    <property type="term" value="F:kinetochore binding"/>
    <property type="evidence" value="ECO:0000250"/>
    <property type="project" value="UniProtKB"/>
</dbReference>
<dbReference type="GO" id="GO:0051301">
    <property type="term" value="P:cell division"/>
    <property type="evidence" value="ECO:0007669"/>
    <property type="project" value="UniProtKB-KW"/>
</dbReference>
<dbReference type="GO" id="GO:0016477">
    <property type="term" value="P:cell migration"/>
    <property type="evidence" value="ECO:0000250"/>
    <property type="project" value="UniProtKB"/>
</dbReference>
<dbReference type="GO" id="GO:0000132">
    <property type="term" value="P:establishment of mitotic spindle orientation"/>
    <property type="evidence" value="ECO:0000250"/>
    <property type="project" value="UniProtKB"/>
</dbReference>
<dbReference type="GO" id="GO:0007080">
    <property type="term" value="P:mitotic metaphase chromosome alignment"/>
    <property type="evidence" value="ECO:0000250"/>
    <property type="project" value="UniProtKB"/>
</dbReference>
<dbReference type="GO" id="GO:0007094">
    <property type="term" value="P:mitotic spindle assembly checkpoint signaling"/>
    <property type="evidence" value="ECO:0007669"/>
    <property type="project" value="InterPro"/>
</dbReference>
<dbReference type="GO" id="GO:0034501">
    <property type="term" value="P:protein localization to kinetochore"/>
    <property type="evidence" value="ECO:0000250"/>
    <property type="project" value="UniProtKB"/>
</dbReference>
<dbReference type="HAMAP" id="MF_03041">
    <property type="entry name" value="SPDLY"/>
    <property type="match status" value="1"/>
</dbReference>
<dbReference type="InterPro" id="IPR028593">
    <property type="entry name" value="SPDLY_chordates"/>
</dbReference>
<dbReference type="InterPro" id="IPR051149">
    <property type="entry name" value="Spindly/BICDR_Dynein_Adapter"/>
</dbReference>
<dbReference type="PANTHER" id="PTHR32123">
    <property type="entry name" value="BICD FAMILY-LIKE CARGO ADAPTER"/>
    <property type="match status" value="1"/>
</dbReference>
<dbReference type="PANTHER" id="PTHR32123:SF9">
    <property type="entry name" value="PROTEIN SPINDLY"/>
    <property type="match status" value="1"/>
</dbReference>